<name>CA4B_CONPR</name>
<evidence type="ECO:0000250" key="1"/>
<evidence type="ECO:0000269" key="2">
    <source>
    </source>
</evidence>
<evidence type="ECO:0000305" key="3"/>
<dbReference type="TCDB" id="8.B.32.2.4">
    <property type="family name" value="the nicotinic acetylcholine receptor-targeting alpha-conotoxin (a-conotoxin) family"/>
</dbReference>
<dbReference type="ConoServer" id="1687">
    <property type="toxin name" value="PeIVB"/>
</dbReference>
<dbReference type="GO" id="GO:0005576">
    <property type="term" value="C:extracellular region"/>
    <property type="evidence" value="ECO:0007669"/>
    <property type="project" value="UniProtKB-SubCell"/>
</dbReference>
<dbReference type="GO" id="GO:0035792">
    <property type="term" value="C:host cell postsynaptic membrane"/>
    <property type="evidence" value="ECO:0007669"/>
    <property type="project" value="UniProtKB-KW"/>
</dbReference>
<dbReference type="GO" id="GO:0030550">
    <property type="term" value="F:acetylcholine receptor inhibitor activity"/>
    <property type="evidence" value="ECO:0007669"/>
    <property type="project" value="UniProtKB-KW"/>
</dbReference>
<dbReference type="GO" id="GO:0099106">
    <property type="term" value="F:ion channel regulator activity"/>
    <property type="evidence" value="ECO:0007669"/>
    <property type="project" value="UniProtKB-KW"/>
</dbReference>
<dbReference type="GO" id="GO:0090729">
    <property type="term" value="F:toxin activity"/>
    <property type="evidence" value="ECO:0007669"/>
    <property type="project" value="UniProtKB-KW"/>
</dbReference>
<proteinExistence type="inferred from homology"/>
<sequence>CCGIPNAACHPCVCTGKC</sequence>
<keyword id="KW-0008">Acetylcholine receptor inhibiting toxin</keyword>
<keyword id="KW-1015">Disulfide bond</keyword>
<keyword id="KW-0379">Hydroxylation</keyword>
<keyword id="KW-0872">Ion channel impairing toxin</keyword>
<keyword id="KW-0528">Neurotoxin</keyword>
<keyword id="KW-0629">Postsynaptic neurotoxin</keyword>
<keyword id="KW-0964">Secreted</keyword>
<keyword id="KW-0800">Toxin</keyword>
<protein>
    <recommendedName>
        <fullName>Alpha-conotoxin PeIVB</fullName>
    </recommendedName>
</protein>
<accession>P0C1X0</accession>
<organism>
    <name type="scientific">Conus pergrandis</name>
    <name type="common">Grand cone</name>
    <dbReference type="NCBI Taxonomy" id="330676"/>
    <lineage>
        <taxon>Eukaryota</taxon>
        <taxon>Metazoa</taxon>
        <taxon>Spiralia</taxon>
        <taxon>Lophotrochozoa</taxon>
        <taxon>Mollusca</taxon>
        <taxon>Gastropoda</taxon>
        <taxon>Caenogastropoda</taxon>
        <taxon>Neogastropoda</taxon>
        <taxon>Conoidea</taxon>
        <taxon>Conidae</taxon>
        <taxon>Conus</taxon>
        <taxon>Embrikena</taxon>
    </lineage>
</organism>
<reference key="1">
    <citation type="journal article" date="2006" name="Biochemistry">
        <title>Definition and characterization of the short alphaA-conotoxins: a single residue determines dissociation kinetics from the fetal muscle nicotinic acetylcholine receptor.</title>
        <authorList>
            <person name="Teichert R.W."/>
            <person name="Lopez-Vera E."/>
            <person name="Gulyas J."/>
            <person name="Watkins M."/>
            <person name="Rivier J."/>
            <person name="Olivera B.M."/>
        </authorList>
    </citation>
    <scope>NUCLEOTIDE SEQUENCE [GENOMIC DNA]</scope>
    <scope>SYNTHESIS</scope>
    <scope>FUNCTION</scope>
</reference>
<feature type="peptide" id="PRO_0000249799" description="Alpha-conotoxin PeIVB">
    <location>
        <begin position="1"/>
        <end position="18"/>
    </location>
</feature>
<feature type="modified residue" description="4-hydroxyproline" evidence="1">
    <location>
        <position position="5"/>
    </location>
</feature>
<feature type="modified residue" description="4-hydroxyproline" evidence="1">
    <location>
        <position position="11"/>
    </location>
</feature>
<comment type="function">
    <text evidence="2">Alpha-conotoxins act on postsynaptic membranes, they bind to the nicotinic acetylcholine receptors (nAChR) and thus inhibit them. This toxin selectively binds to the fetal (alpha-1/beta-1/gamma/delta subunits) mammalian muscle nicotinic acetylcholine receptors (nAChR). It blocks the elicited currents completely and dissociates very slowly from the fetal muscle receptor.</text>
</comment>
<comment type="subcellular location">
    <subcellularLocation>
        <location>Secreted</location>
    </subcellularLocation>
</comment>
<comment type="tissue specificity">
    <text>Expressed by the venom duct.</text>
</comment>
<comment type="domain">
    <text>The cysteine framework is IV (CC-C-C-C-C).</text>
</comment>
<comment type="PTM">
    <text evidence="1">Contains 3 disulfide bonds (By similarity). They are not added, since framework IV presents two different connectivities (I-V, II-III, IV-VI and I-III, II-V, IV-VI).</text>
</comment>
<comment type="similarity">
    <text evidence="3">Belongs to the conotoxin A superfamily.</text>
</comment>